<sequence length="292" mass="32177">MSQDVNELSKQPTPDKAEDNAFFPSPYSLSQYTAPKTDFDGVEHKGAYKDGKWKVLMIAAEERYVLLENGKMFSTGNHPVEMLLPLHHLMEAGFDVDVATLSGYPVKLELWAMPTEDEAVISTYNKLKEKLKQPKKLADVIKNELGPDSDYLSVFIPGGHAAVVGISESEDVQQTLDWALDNDRFIVTLCHGPAALLSAGINREKSPLEGYSVCVFPDSLDEGANIEIGYLPGRLKWLVADLLTKQGLKVVNDDMTGRTLKDRKLLTGDSPLASNELGKLAVNEMLNAIQNK</sequence>
<reference key="1">
    <citation type="journal article" date="2008" name="J. Bacteriol.">
        <title>Genome sequence of Staphylococcus aureus strain Newman and comparative analysis of staphylococcal genomes: polymorphism and evolution of two major pathogenicity islands.</title>
        <authorList>
            <person name="Baba T."/>
            <person name="Bae T."/>
            <person name="Schneewind O."/>
            <person name="Takeuchi F."/>
            <person name="Hiramatsu K."/>
        </authorList>
    </citation>
    <scope>NUCLEOTIDE SEQUENCE [LARGE SCALE GENOMIC DNA]</scope>
    <source>
        <strain>Newman</strain>
    </source>
</reference>
<dbReference type="EC" id="3.1.2.-" evidence="1"/>
<dbReference type="EC" id="3.5.1.-" evidence="1"/>
<dbReference type="EC" id="3.5.1.124" evidence="1"/>
<dbReference type="EMBL" id="AP009351">
    <property type="protein sequence ID" value="BAF66785.1"/>
    <property type="molecule type" value="Genomic_DNA"/>
</dbReference>
<dbReference type="RefSeq" id="WP_000076403.1">
    <property type="nucleotide sequence ID" value="NZ_CP023390.1"/>
</dbReference>
<dbReference type="SMR" id="A6QEK3"/>
<dbReference type="MEROPS" id="C56.006"/>
<dbReference type="KEGG" id="sae:NWMN_0513"/>
<dbReference type="HOGENOM" id="CLU_066933_0_0_9"/>
<dbReference type="Proteomes" id="UP000006386">
    <property type="component" value="Chromosome"/>
</dbReference>
<dbReference type="GO" id="GO:0005737">
    <property type="term" value="C:cytoplasm"/>
    <property type="evidence" value="ECO:0007669"/>
    <property type="project" value="UniProtKB-SubCell"/>
</dbReference>
<dbReference type="GO" id="GO:0019172">
    <property type="term" value="F:glyoxalase III activity"/>
    <property type="evidence" value="ECO:0007669"/>
    <property type="project" value="TreeGrafter"/>
</dbReference>
<dbReference type="GO" id="GO:0036524">
    <property type="term" value="F:protein deglycase activity"/>
    <property type="evidence" value="ECO:0007669"/>
    <property type="project" value="UniProtKB-UniRule"/>
</dbReference>
<dbReference type="GO" id="GO:0016790">
    <property type="term" value="F:thiolester hydrolase activity"/>
    <property type="evidence" value="ECO:0007669"/>
    <property type="project" value="UniProtKB-UniRule"/>
</dbReference>
<dbReference type="GO" id="GO:0006281">
    <property type="term" value="P:DNA repair"/>
    <property type="evidence" value="ECO:0007669"/>
    <property type="project" value="UniProtKB-UniRule"/>
</dbReference>
<dbReference type="GO" id="GO:0019243">
    <property type="term" value="P:methylglyoxal catabolic process to D-lactate via S-lactoyl-glutathione"/>
    <property type="evidence" value="ECO:0007669"/>
    <property type="project" value="TreeGrafter"/>
</dbReference>
<dbReference type="GO" id="GO:0030091">
    <property type="term" value="P:protein repair"/>
    <property type="evidence" value="ECO:0007669"/>
    <property type="project" value="UniProtKB-UniRule"/>
</dbReference>
<dbReference type="CDD" id="cd03148">
    <property type="entry name" value="GATase1_EcHsp31_like"/>
    <property type="match status" value="1"/>
</dbReference>
<dbReference type="Gene3D" id="3.40.50.880">
    <property type="match status" value="1"/>
</dbReference>
<dbReference type="HAMAP" id="MF_01046">
    <property type="entry name" value="Deglycase_HchA"/>
    <property type="match status" value="1"/>
</dbReference>
<dbReference type="InterPro" id="IPR029062">
    <property type="entry name" value="Class_I_gatase-like"/>
</dbReference>
<dbReference type="InterPro" id="IPR002818">
    <property type="entry name" value="DJ-1/PfpI"/>
</dbReference>
<dbReference type="InterPro" id="IPR017283">
    <property type="entry name" value="HchA"/>
</dbReference>
<dbReference type="InterPro" id="IPR050325">
    <property type="entry name" value="Prot/Nucl_acid_deglycase"/>
</dbReference>
<dbReference type="NCBIfam" id="NF003168">
    <property type="entry name" value="PRK04155.1"/>
    <property type="match status" value="1"/>
</dbReference>
<dbReference type="PANTHER" id="PTHR48094">
    <property type="entry name" value="PROTEIN/NUCLEIC ACID DEGLYCASE DJ-1-RELATED"/>
    <property type="match status" value="1"/>
</dbReference>
<dbReference type="PANTHER" id="PTHR48094:SF20">
    <property type="entry name" value="PROTEIN_NUCLEIC ACID DEGLYCASE 1"/>
    <property type="match status" value="1"/>
</dbReference>
<dbReference type="Pfam" id="PF01965">
    <property type="entry name" value="DJ-1_PfpI"/>
    <property type="match status" value="1"/>
</dbReference>
<dbReference type="PIRSF" id="PIRSF037798">
    <property type="entry name" value="Chaperone_HchA"/>
    <property type="match status" value="1"/>
</dbReference>
<dbReference type="SUPFAM" id="SSF52317">
    <property type="entry name" value="Class I glutamine amidotransferase-like"/>
    <property type="match status" value="1"/>
</dbReference>
<keyword id="KW-0963">Cytoplasm</keyword>
<keyword id="KW-0227">DNA damage</keyword>
<keyword id="KW-0234">DNA repair</keyword>
<keyword id="KW-0378">Hydrolase</keyword>
<keyword id="KW-0346">Stress response</keyword>
<comment type="function">
    <text evidence="1">Protein and nucleotide deglycase that catalyzes the deglycation of the Maillard adducts formed between amino groups of proteins or nucleotides and reactive carbonyl groups of glyoxals. Thus, functions as a protein deglycase that repairs methylglyoxal- and glyoxal-glycated proteins, and releases repaired proteins and lactate or glycolate, respectively. Deglycates cysteine, arginine and lysine residues in proteins, and thus reactivates these proteins by reversing glycation by glyoxals. Acts on early glycation intermediates (hemithioacetals and aminocarbinols), preventing the formation of Schiff bases and advanced glycation endproducts (AGE). Also functions as a nucleotide deglycase able to repair glycated guanine in the free nucleotide pool (GTP, GDP, GMP, dGTP) and in DNA and RNA. Is thus involved in a major nucleotide repair system named guanine glycation repair (GG repair), dedicated to reversing methylglyoxal and glyoxal damage via nucleotide sanitization and direct nucleic acid repair. Plays an important role in protecting cells from carbonyl stress.</text>
</comment>
<comment type="catalytic activity">
    <reaction evidence="1">
        <text>N(omega)-(1-hydroxy-2-oxopropyl)-L-arginyl-[protein] + H2O = lactate + L-arginyl-[protein] + H(+)</text>
        <dbReference type="Rhea" id="RHEA:49548"/>
        <dbReference type="Rhea" id="RHEA-COMP:10532"/>
        <dbReference type="Rhea" id="RHEA-COMP:12428"/>
        <dbReference type="ChEBI" id="CHEBI:15377"/>
        <dbReference type="ChEBI" id="CHEBI:15378"/>
        <dbReference type="ChEBI" id="CHEBI:24996"/>
        <dbReference type="ChEBI" id="CHEBI:29965"/>
        <dbReference type="ChEBI" id="CHEBI:131708"/>
        <dbReference type="EC" id="3.5.1.124"/>
    </reaction>
</comment>
<comment type="catalytic activity">
    <reaction evidence="1">
        <text>N(6)-(1-hydroxy-2-oxopropyl)-L-lysyl-[protein] + H2O = lactate + L-lysyl-[protein] + H(+)</text>
        <dbReference type="Rhea" id="RHEA:49552"/>
        <dbReference type="Rhea" id="RHEA-COMP:9752"/>
        <dbReference type="Rhea" id="RHEA-COMP:12429"/>
        <dbReference type="ChEBI" id="CHEBI:15377"/>
        <dbReference type="ChEBI" id="CHEBI:15378"/>
        <dbReference type="ChEBI" id="CHEBI:24996"/>
        <dbReference type="ChEBI" id="CHEBI:29969"/>
        <dbReference type="ChEBI" id="CHEBI:131709"/>
        <dbReference type="EC" id="3.5.1.124"/>
    </reaction>
</comment>
<comment type="catalytic activity">
    <reaction evidence="1">
        <text>S-(1-hydroxy-2-oxopropyl)-L-cysteinyl-[protein] + H2O = lactate + L-cysteinyl-[protein] + H(+)</text>
        <dbReference type="Rhea" id="RHEA:49556"/>
        <dbReference type="Rhea" id="RHEA-COMP:10131"/>
        <dbReference type="Rhea" id="RHEA-COMP:12430"/>
        <dbReference type="ChEBI" id="CHEBI:15377"/>
        <dbReference type="ChEBI" id="CHEBI:15378"/>
        <dbReference type="ChEBI" id="CHEBI:24996"/>
        <dbReference type="ChEBI" id="CHEBI:29950"/>
        <dbReference type="ChEBI" id="CHEBI:131710"/>
        <dbReference type="EC" id="3.5.1.124"/>
    </reaction>
</comment>
<comment type="catalytic activity">
    <reaction evidence="1">
        <text>N(omega)-(1-hydroxy-2-oxoethyl)-L-arginyl-[protein] + H2O = L-arginyl-[protein] + glycolate + H(+)</text>
        <dbReference type="Rhea" id="RHEA:57188"/>
        <dbReference type="Rhea" id="RHEA-COMP:10532"/>
        <dbReference type="Rhea" id="RHEA-COMP:14844"/>
        <dbReference type="ChEBI" id="CHEBI:15377"/>
        <dbReference type="ChEBI" id="CHEBI:15378"/>
        <dbReference type="ChEBI" id="CHEBI:29805"/>
        <dbReference type="ChEBI" id="CHEBI:29965"/>
        <dbReference type="ChEBI" id="CHEBI:141553"/>
        <dbReference type="EC" id="3.5.1.124"/>
    </reaction>
</comment>
<comment type="catalytic activity">
    <reaction evidence="1">
        <text>N(6)-(1-hydroxy-2-oxoethyl)-L-lysyl-[protein] + H2O = glycolate + L-lysyl-[protein] + H(+)</text>
        <dbReference type="Rhea" id="RHEA:57192"/>
        <dbReference type="Rhea" id="RHEA-COMP:9752"/>
        <dbReference type="Rhea" id="RHEA-COMP:14845"/>
        <dbReference type="ChEBI" id="CHEBI:15377"/>
        <dbReference type="ChEBI" id="CHEBI:15378"/>
        <dbReference type="ChEBI" id="CHEBI:29805"/>
        <dbReference type="ChEBI" id="CHEBI:29969"/>
        <dbReference type="ChEBI" id="CHEBI:141554"/>
        <dbReference type="EC" id="3.5.1.124"/>
    </reaction>
</comment>
<comment type="catalytic activity">
    <reaction evidence="1">
        <text>S-(1-hydroxy-2-oxoethyl)-L-cysteinyl-[protein] + H2O = glycolate + L-cysteinyl-[protein] + H(+)</text>
        <dbReference type="Rhea" id="RHEA:57196"/>
        <dbReference type="Rhea" id="RHEA-COMP:10131"/>
        <dbReference type="Rhea" id="RHEA-COMP:14846"/>
        <dbReference type="ChEBI" id="CHEBI:15377"/>
        <dbReference type="ChEBI" id="CHEBI:15378"/>
        <dbReference type="ChEBI" id="CHEBI:29805"/>
        <dbReference type="ChEBI" id="CHEBI:29950"/>
        <dbReference type="ChEBI" id="CHEBI:141555"/>
        <dbReference type="EC" id="3.5.1.124"/>
    </reaction>
</comment>
<comment type="catalytic activity">
    <reaction evidence="1">
        <text>N(2)-(1-hydroxy-2-oxopropyl)-dGTP + H2O = lactate + dGTP + H(+)</text>
        <dbReference type="Rhea" id="RHEA:57244"/>
        <dbReference type="ChEBI" id="CHEBI:15377"/>
        <dbReference type="ChEBI" id="CHEBI:15378"/>
        <dbReference type="ChEBI" id="CHEBI:24996"/>
        <dbReference type="ChEBI" id="CHEBI:61429"/>
        <dbReference type="ChEBI" id="CHEBI:141569"/>
    </reaction>
</comment>
<comment type="catalytic activity">
    <reaction evidence="1">
        <text>N(2)-(1-hydroxy-2-oxopropyl)-GTP + H2O = lactate + GTP + H(+)</text>
        <dbReference type="Rhea" id="RHEA:57256"/>
        <dbReference type="ChEBI" id="CHEBI:15377"/>
        <dbReference type="ChEBI" id="CHEBI:15378"/>
        <dbReference type="ChEBI" id="CHEBI:24996"/>
        <dbReference type="ChEBI" id="CHEBI:37565"/>
        <dbReference type="ChEBI" id="CHEBI:141570"/>
    </reaction>
</comment>
<comment type="catalytic activity">
    <reaction evidence="1">
        <text>N(2)-(1-hydroxy-2-oxopropyl)-GDP + H2O = lactate + GDP + H(+)</text>
        <dbReference type="Rhea" id="RHEA:57260"/>
        <dbReference type="ChEBI" id="CHEBI:15377"/>
        <dbReference type="ChEBI" id="CHEBI:15378"/>
        <dbReference type="ChEBI" id="CHEBI:24996"/>
        <dbReference type="ChEBI" id="CHEBI:58189"/>
        <dbReference type="ChEBI" id="CHEBI:141573"/>
    </reaction>
</comment>
<comment type="catalytic activity">
    <reaction evidence="1">
        <text>N(2)-(1-hydroxy-2-oxopropyl)-GMP + H2O = lactate + GMP + H(+)</text>
        <dbReference type="Rhea" id="RHEA:57268"/>
        <dbReference type="ChEBI" id="CHEBI:15377"/>
        <dbReference type="ChEBI" id="CHEBI:15378"/>
        <dbReference type="ChEBI" id="CHEBI:24996"/>
        <dbReference type="ChEBI" id="CHEBI:58115"/>
        <dbReference type="ChEBI" id="CHEBI:141575"/>
    </reaction>
</comment>
<comment type="catalytic activity">
    <reaction evidence="1">
        <text>N(2)-(1-hydroxy-2-oxoethyl)-dGTP + H2O = dGTP + glycolate + H(+)</text>
        <dbReference type="Rhea" id="RHEA:57248"/>
        <dbReference type="ChEBI" id="CHEBI:15377"/>
        <dbReference type="ChEBI" id="CHEBI:15378"/>
        <dbReference type="ChEBI" id="CHEBI:29805"/>
        <dbReference type="ChEBI" id="CHEBI:61429"/>
        <dbReference type="ChEBI" id="CHEBI:141572"/>
    </reaction>
</comment>
<comment type="catalytic activity">
    <reaction evidence="1">
        <text>N(2)-(1-hydroxy-2-oxoethyl)-GTP + H2O = glycolate + GTP + H(+)</text>
        <dbReference type="Rhea" id="RHEA:57252"/>
        <dbReference type="ChEBI" id="CHEBI:15377"/>
        <dbReference type="ChEBI" id="CHEBI:15378"/>
        <dbReference type="ChEBI" id="CHEBI:29805"/>
        <dbReference type="ChEBI" id="CHEBI:37565"/>
        <dbReference type="ChEBI" id="CHEBI:141571"/>
    </reaction>
</comment>
<comment type="catalytic activity">
    <reaction evidence="1">
        <text>N(2)-(1-hydroxy-2-oxoethyl)-GDP + H2O = glycolate + GDP + H(+)</text>
        <dbReference type="Rhea" id="RHEA:57264"/>
        <dbReference type="ChEBI" id="CHEBI:15377"/>
        <dbReference type="ChEBI" id="CHEBI:15378"/>
        <dbReference type="ChEBI" id="CHEBI:29805"/>
        <dbReference type="ChEBI" id="CHEBI:58189"/>
        <dbReference type="ChEBI" id="CHEBI:141574"/>
    </reaction>
</comment>
<comment type="catalytic activity">
    <reaction evidence="1">
        <text>N(2)-(1-hydroxy-2-oxoethyl)-GMP + H2O = glycolate + GMP + H(+)</text>
        <dbReference type="Rhea" id="RHEA:57304"/>
        <dbReference type="ChEBI" id="CHEBI:15377"/>
        <dbReference type="ChEBI" id="CHEBI:15378"/>
        <dbReference type="ChEBI" id="CHEBI:29805"/>
        <dbReference type="ChEBI" id="CHEBI:58115"/>
        <dbReference type="ChEBI" id="CHEBI:141576"/>
    </reaction>
</comment>
<comment type="catalytic activity">
    <reaction evidence="1">
        <text>an N(2)-(1-hydroxy-2-oxopropyl)-guanosine in RNA + H2O = a guanosine in RNA + lactate + H(+)</text>
        <dbReference type="Rhea" id="RHEA:57288"/>
        <dbReference type="Rhea" id="RHEA-COMP:14855"/>
        <dbReference type="Rhea" id="RHEA-COMP:14858"/>
        <dbReference type="ChEBI" id="CHEBI:15377"/>
        <dbReference type="ChEBI" id="CHEBI:15378"/>
        <dbReference type="ChEBI" id="CHEBI:24996"/>
        <dbReference type="ChEBI" id="CHEBI:74269"/>
        <dbReference type="ChEBI" id="CHEBI:141580"/>
    </reaction>
</comment>
<comment type="catalytic activity">
    <reaction evidence="1">
        <text>an N(2)-(1-hydroxy-2-oxopropyl)-2'-deoxyguanosine in DNA + H2O = a 2'-deoxyguanosine in DNA + lactate + H(+)</text>
        <dbReference type="Rhea" id="RHEA:57300"/>
        <dbReference type="Rhea" id="RHEA-COMP:11367"/>
        <dbReference type="Rhea" id="RHEA-COMP:14856"/>
        <dbReference type="ChEBI" id="CHEBI:15377"/>
        <dbReference type="ChEBI" id="CHEBI:15378"/>
        <dbReference type="ChEBI" id="CHEBI:24996"/>
        <dbReference type="ChEBI" id="CHEBI:85445"/>
        <dbReference type="ChEBI" id="CHEBI:141578"/>
    </reaction>
</comment>
<comment type="catalytic activity">
    <reaction evidence="1">
        <text>an N(2)-(1-hydroxy-2-oxoethyl)-guanosine in RNA + H2O = a guanosine in RNA + glycolate + H(+)</text>
        <dbReference type="Rhea" id="RHEA:57292"/>
        <dbReference type="Rhea" id="RHEA-COMP:14855"/>
        <dbReference type="Rhea" id="RHEA-COMP:14859"/>
        <dbReference type="ChEBI" id="CHEBI:15377"/>
        <dbReference type="ChEBI" id="CHEBI:15378"/>
        <dbReference type="ChEBI" id="CHEBI:29805"/>
        <dbReference type="ChEBI" id="CHEBI:74269"/>
        <dbReference type="ChEBI" id="CHEBI:141581"/>
    </reaction>
</comment>
<comment type="catalytic activity">
    <reaction evidence="1">
        <text>an N(2)-(1-hydroxy-2-oxoethyl)-2'-deoxyguanosine in DNA + H2O = a 2'-deoxyguanosine in DNA + glycolate + H(+)</text>
        <dbReference type="Rhea" id="RHEA:57296"/>
        <dbReference type="Rhea" id="RHEA-COMP:11367"/>
        <dbReference type="Rhea" id="RHEA-COMP:14857"/>
        <dbReference type="ChEBI" id="CHEBI:15377"/>
        <dbReference type="ChEBI" id="CHEBI:15378"/>
        <dbReference type="ChEBI" id="CHEBI:29805"/>
        <dbReference type="ChEBI" id="CHEBI:85445"/>
        <dbReference type="ChEBI" id="CHEBI:141579"/>
    </reaction>
</comment>
<comment type="subcellular location">
    <subcellularLocation>
        <location evidence="1">Cytoplasm</location>
    </subcellularLocation>
</comment>
<comment type="similarity">
    <text evidence="1">Belongs to the peptidase C56 family. HchA subfamily.</text>
</comment>
<proteinExistence type="inferred from homology"/>
<name>HCHA_STAAE</name>
<evidence type="ECO:0000255" key="1">
    <source>
        <dbReference type="HAMAP-Rule" id="MF_01046"/>
    </source>
</evidence>
<evidence type="ECO:0000256" key="2">
    <source>
        <dbReference type="SAM" id="MobiDB-lite"/>
    </source>
</evidence>
<gene>
    <name evidence="1" type="primary">hchA</name>
    <name type="ordered locus">NWMN_0513</name>
</gene>
<organism>
    <name type="scientific">Staphylococcus aureus (strain Newman)</name>
    <dbReference type="NCBI Taxonomy" id="426430"/>
    <lineage>
        <taxon>Bacteria</taxon>
        <taxon>Bacillati</taxon>
        <taxon>Bacillota</taxon>
        <taxon>Bacilli</taxon>
        <taxon>Bacillales</taxon>
        <taxon>Staphylococcaceae</taxon>
        <taxon>Staphylococcus</taxon>
    </lineage>
</organism>
<accession>A6QEK3</accession>
<feature type="chain" id="PRO_1000072991" description="Protein/nucleic acid deglycase HchA">
    <location>
        <begin position="1"/>
        <end position="292"/>
    </location>
</feature>
<feature type="region of interest" description="Disordered" evidence="2">
    <location>
        <begin position="1"/>
        <end position="23"/>
    </location>
</feature>
<feature type="compositionally biased region" description="Polar residues" evidence="2">
    <location>
        <begin position="1"/>
        <end position="12"/>
    </location>
</feature>
<feature type="active site" description="Nucleophile" evidence="1">
    <location>
        <position position="190"/>
    </location>
</feature>
<protein>
    <recommendedName>
        <fullName evidence="1">Protein/nucleic acid deglycase HchA</fullName>
        <ecNumber evidence="1">3.1.2.-</ecNumber>
        <ecNumber evidence="1">3.5.1.-</ecNumber>
        <ecNumber evidence="1">3.5.1.124</ecNumber>
    </recommendedName>
    <alternativeName>
        <fullName evidence="1">Maillard deglycase</fullName>
    </alternativeName>
</protein>